<sequence length="116" mass="12907">MNLIMSSVAATALISLILAFVAFWLPSLNPDNEKLSPYECGFDPLGSARLPFSLRFFLVAILFLLFDLEIALLLPLPWGNQLLTPSISLLWATSIIILLTLGLIYEWLQGGLEWAE</sequence>
<name>NU3M_SQUAC</name>
<accession>Q9ZZ47</accession>
<proteinExistence type="inferred from homology"/>
<protein>
    <recommendedName>
        <fullName>NADH-ubiquinone oxidoreductase chain 3</fullName>
        <ecNumber>7.1.1.2</ecNumber>
    </recommendedName>
    <alternativeName>
        <fullName>NADH dehydrogenase subunit 3</fullName>
    </alternativeName>
</protein>
<dbReference type="EC" id="7.1.1.2"/>
<dbReference type="EMBL" id="Y18134">
    <property type="protein sequence ID" value="CAA77056.1"/>
    <property type="molecule type" value="Genomic_DNA"/>
</dbReference>
<dbReference type="PIR" id="T11541">
    <property type="entry name" value="T11541"/>
</dbReference>
<dbReference type="RefSeq" id="NP_008530.1">
    <property type="nucleotide sequence ID" value="NC_002012.1"/>
</dbReference>
<dbReference type="SMR" id="Q9ZZ47"/>
<dbReference type="GeneID" id="808383"/>
<dbReference type="CTD" id="4537"/>
<dbReference type="GO" id="GO:0031966">
    <property type="term" value="C:mitochondrial membrane"/>
    <property type="evidence" value="ECO:0007669"/>
    <property type="project" value="UniProtKB-SubCell"/>
</dbReference>
<dbReference type="GO" id="GO:0030964">
    <property type="term" value="C:NADH dehydrogenase complex"/>
    <property type="evidence" value="ECO:0007669"/>
    <property type="project" value="TreeGrafter"/>
</dbReference>
<dbReference type="GO" id="GO:0008137">
    <property type="term" value="F:NADH dehydrogenase (ubiquinone) activity"/>
    <property type="evidence" value="ECO:0007669"/>
    <property type="project" value="UniProtKB-EC"/>
</dbReference>
<dbReference type="FunFam" id="1.20.58.1610:FF:000004">
    <property type="entry name" value="NADH-quinone oxidoreductase subunit A"/>
    <property type="match status" value="1"/>
</dbReference>
<dbReference type="Gene3D" id="1.20.58.1610">
    <property type="entry name" value="NADH:ubiquinone/plastoquinone oxidoreductase, chain 3"/>
    <property type="match status" value="1"/>
</dbReference>
<dbReference type="InterPro" id="IPR000440">
    <property type="entry name" value="NADH_UbQ/plastoQ_OxRdtase_su3"/>
</dbReference>
<dbReference type="InterPro" id="IPR038430">
    <property type="entry name" value="NDAH_ubi_oxred_su3_sf"/>
</dbReference>
<dbReference type="PANTHER" id="PTHR11058">
    <property type="entry name" value="NADH-UBIQUINONE OXIDOREDUCTASE CHAIN 3"/>
    <property type="match status" value="1"/>
</dbReference>
<dbReference type="PANTHER" id="PTHR11058:SF9">
    <property type="entry name" value="NADH-UBIQUINONE OXIDOREDUCTASE CHAIN 3"/>
    <property type="match status" value="1"/>
</dbReference>
<dbReference type="Pfam" id="PF00507">
    <property type="entry name" value="Oxidored_q4"/>
    <property type="match status" value="1"/>
</dbReference>
<geneLocation type="mitochondrion"/>
<organism>
    <name type="scientific">Squalus acanthias</name>
    <name type="common">Spiny dogfish</name>
    <dbReference type="NCBI Taxonomy" id="7797"/>
    <lineage>
        <taxon>Eukaryota</taxon>
        <taxon>Metazoa</taxon>
        <taxon>Chordata</taxon>
        <taxon>Craniata</taxon>
        <taxon>Vertebrata</taxon>
        <taxon>Chondrichthyes</taxon>
        <taxon>Elasmobranchii</taxon>
        <taxon>Squalomorphii</taxon>
        <taxon>Squaliformes</taxon>
        <taxon>Squalidae</taxon>
        <taxon>Squalus</taxon>
    </lineage>
</organism>
<evidence type="ECO:0000250" key="1"/>
<evidence type="ECO:0000255" key="2"/>
<evidence type="ECO:0000305" key="3"/>
<reference key="1">
    <citation type="journal article" date="1999" name="J. Mol. Evol.">
        <title>Phylogenetic studies of complete mitochondrial DNA molecules place cartilaginous fishes within the tree of bony fishes.</title>
        <authorList>
            <person name="Rasmussen A.S."/>
            <person name="Arnason U."/>
        </authorList>
    </citation>
    <scope>NUCLEOTIDE SEQUENCE [GENOMIC DNA]</scope>
</reference>
<keyword id="KW-0249">Electron transport</keyword>
<keyword id="KW-0472">Membrane</keyword>
<keyword id="KW-0496">Mitochondrion</keyword>
<keyword id="KW-0520">NAD</keyword>
<keyword id="KW-0679">Respiratory chain</keyword>
<keyword id="KW-1278">Translocase</keyword>
<keyword id="KW-0812">Transmembrane</keyword>
<keyword id="KW-1133">Transmembrane helix</keyword>
<keyword id="KW-0813">Transport</keyword>
<keyword id="KW-0830">Ubiquinone</keyword>
<gene>
    <name type="primary">MT-ND3</name>
    <name type="synonym">MTND3</name>
    <name type="synonym">NADH3</name>
    <name type="synonym">ND3</name>
</gene>
<comment type="function">
    <text evidence="1">Core subunit of the mitochondrial membrane respiratory chain NADH dehydrogenase (Complex I) that is believed to belong to the minimal assembly required for catalysis. Complex I functions in the transfer of electrons from NADH to the respiratory chain. The immediate electron acceptor for the enzyme is believed to be ubiquinone (By similarity).</text>
</comment>
<comment type="catalytic activity">
    <reaction>
        <text>a ubiquinone + NADH + 5 H(+)(in) = a ubiquinol + NAD(+) + 4 H(+)(out)</text>
        <dbReference type="Rhea" id="RHEA:29091"/>
        <dbReference type="Rhea" id="RHEA-COMP:9565"/>
        <dbReference type="Rhea" id="RHEA-COMP:9566"/>
        <dbReference type="ChEBI" id="CHEBI:15378"/>
        <dbReference type="ChEBI" id="CHEBI:16389"/>
        <dbReference type="ChEBI" id="CHEBI:17976"/>
        <dbReference type="ChEBI" id="CHEBI:57540"/>
        <dbReference type="ChEBI" id="CHEBI:57945"/>
        <dbReference type="EC" id="7.1.1.2"/>
    </reaction>
</comment>
<comment type="subcellular location">
    <subcellularLocation>
        <location evidence="1">Mitochondrion membrane</location>
        <topology evidence="1">Multi-pass membrane protein</topology>
    </subcellularLocation>
</comment>
<comment type="similarity">
    <text evidence="3">Belongs to the complex I subunit 3 family.</text>
</comment>
<feature type="chain" id="PRO_0000117835" description="NADH-ubiquinone oxidoreductase chain 3">
    <location>
        <begin position="1"/>
        <end position="116"/>
    </location>
</feature>
<feature type="transmembrane region" description="Helical" evidence="2">
    <location>
        <begin position="8"/>
        <end position="28"/>
    </location>
</feature>
<feature type="transmembrane region" description="Helical" evidence="2">
    <location>
        <begin position="56"/>
        <end position="76"/>
    </location>
</feature>
<feature type="transmembrane region" description="Helical" evidence="2">
    <location>
        <begin position="87"/>
        <end position="107"/>
    </location>
</feature>